<reference key="1">
    <citation type="journal article" date="2007" name="Proc. Natl. Acad. Sci. U.S.A.">
        <title>Independent sorting-out of thousands of duplicated gene pairs in two yeast species descended from a whole-genome duplication.</title>
        <authorList>
            <person name="Scannell D.R."/>
            <person name="Frank A.C."/>
            <person name="Conant G.C."/>
            <person name="Byrne K.P."/>
            <person name="Woolfit M."/>
            <person name="Wolfe K.H."/>
        </authorList>
    </citation>
    <scope>NUCLEOTIDE SEQUENCE [LARGE SCALE GENOMIC DNA]</scope>
    <source>
        <strain>ATCC 22028 / DSM 70294 / BCRC 21397 / CBS 2163 / NBRC 10782 / NRRL Y-8283 / UCD 57-17</strain>
    </source>
</reference>
<proteinExistence type="inferred from homology"/>
<comment type="function">
    <text evidence="1">Catalyzes the cleavage of L-kynurenine (L-Kyn) and L-3-hydroxykynurenine (L-3OHKyn) into anthranilic acid (AA) and 3-hydroxyanthranilic acid (3-OHAA), respectively.</text>
</comment>
<comment type="catalytic activity">
    <reaction evidence="1">
        <text>L-kynurenine + H2O = anthranilate + L-alanine + H(+)</text>
        <dbReference type="Rhea" id="RHEA:16813"/>
        <dbReference type="ChEBI" id="CHEBI:15377"/>
        <dbReference type="ChEBI" id="CHEBI:15378"/>
        <dbReference type="ChEBI" id="CHEBI:16567"/>
        <dbReference type="ChEBI" id="CHEBI:57959"/>
        <dbReference type="ChEBI" id="CHEBI:57972"/>
        <dbReference type="EC" id="3.7.1.3"/>
    </reaction>
</comment>
<comment type="catalytic activity">
    <reaction evidence="1">
        <text>3-hydroxy-L-kynurenine + H2O = 3-hydroxyanthranilate + L-alanine + H(+)</text>
        <dbReference type="Rhea" id="RHEA:25143"/>
        <dbReference type="ChEBI" id="CHEBI:15377"/>
        <dbReference type="ChEBI" id="CHEBI:15378"/>
        <dbReference type="ChEBI" id="CHEBI:36559"/>
        <dbReference type="ChEBI" id="CHEBI:57972"/>
        <dbReference type="ChEBI" id="CHEBI:58125"/>
        <dbReference type="EC" id="3.7.1.3"/>
    </reaction>
</comment>
<comment type="cofactor">
    <cofactor evidence="1">
        <name>pyridoxal 5'-phosphate</name>
        <dbReference type="ChEBI" id="CHEBI:597326"/>
    </cofactor>
</comment>
<comment type="pathway">
    <text evidence="1">Amino-acid degradation; L-kynurenine degradation; L-alanine and anthranilate from L-kynurenine: step 1/1.</text>
</comment>
<comment type="pathway">
    <text evidence="1">Cofactor biosynthesis; NAD(+) biosynthesis; quinolinate from L-kynurenine: step 2/3.</text>
</comment>
<comment type="subunit">
    <text evidence="1">Homodimer.</text>
</comment>
<comment type="subcellular location">
    <subcellularLocation>
        <location evidence="1">Cytoplasm</location>
    </subcellularLocation>
</comment>
<comment type="similarity">
    <text evidence="1">Belongs to the kynureninase family.</text>
</comment>
<organism>
    <name type="scientific">Vanderwaltozyma polyspora (strain ATCC 22028 / DSM 70294 / BCRC 21397 / CBS 2163 / NBRC 10782 / NRRL Y-8283 / UCD 57-17)</name>
    <name type="common">Kluyveromyces polysporus</name>
    <dbReference type="NCBI Taxonomy" id="436907"/>
    <lineage>
        <taxon>Eukaryota</taxon>
        <taxon>Fungi</taxon>
        <taxon>Dikarya</taxon>
        <taxon>Ascomycota</taxon>
        <taxon>Saccharomycotina</taxon>
        <taxon>Saccharomycetes</taxon>
        <taxon>Saccharomycetales</taxon>
        <taxon>Saccharomycetaceae</taxon>
        <taxon>Vanderwaltozyma</taxon>
    </lineage>
</organism>
<sequence length="455" mass="51982">MGIPVNSENVNDETEGDVAGKEVYYLCGNSLGLMPKDTKETVTRELDAWRDRAVESHFKHPTDTSWVDIDLPVVPLLAPIVGGKNEEVAVMNTLTANLNSLLVSFYRPTKKRFKIVFEKKAFPSDYYAFYNQCRLHNFDPNECILQISARPNETFLRTEDILKVIEENNESIALVCLPGIQYYSGQLFEIERITKFAHQYPEIIVGWDLAHAVGNVPLKLHDWGVDFACWCSYKYLNSGPGSIGGLFIHEKWHHSALKFGDDVNHDEYRPRLAGWWGNNNEKRFQMLEKFEPIKGALGFRQSNPSVLDVVCLQSSLKIFQKYGGVENLRLKSLKLTKYLINQLQKSPYYHPKKQSSKEELGFRIITPIQNESQYGAQISIQLTPSRLTGKNKDTMEIVFEYMHRHGVVVDERKPNVIRISPVPLYNTFQDVFTTVAILNSALDSVKKSIKALKSN</sequence>
<feature type="chain" id="PRO_0000360873" description="Kynureninase">
    <location>
        <begin position="1"/>
        <end position="455"/>
    </location>
</feature>
<feature type="binding site" evidence="1">
    <location>
        <position position="94"/>
    </location>
    <ligand>
        <name>pyridoxal 5'-phosphate</name>
        <dbReference type="ChEBI" id="CHEBI:597326"/>
    </ligand>
</feature>
<feature type="binding site" evidence="1">
    <location>
        <position position="95"/>
    </location>
    <ligand>
        <name>pyridoxal 5'-phosphate</name>
        <dbReference type="ChEBI" id="CHEBI:597326"/>
    </ligand>
</feature>
<feature type="binding site" evidence="1">
    <location>
        <begin position="122"/>
        <end position="125"/>
    </location>
    <ligand>
        <name>pyridoxal 5'-phosphate</name>
        <dbReference type="ChEBI" id="CHEBI:597326"/>
    </ligand>
</feature>
<feature type="binding site" evidence="1">
    <location>
        <position position="208"/>
    </location>
    <ligand>
        <name>pyridoxal 5'-phosphate</name>
        <dbReference type="ChEBI" id="CHEBI:597326"/>
    </ligand>
</feature>
<feature type="binding site" evidence="1">
    <location>
        <position position="211"/>
    </location>
    <ligand>
        <name>pyridoxal 5'-phosphate</name>
        <dbReference type="ChEBI" id="CHEBI:597326"/>
    </ligand>
</feature>
<feature type="binding site" evidence="1">
    <location>
        <position position="233"/>
    </location>
    <ligand>
        <name>pyridoxal 5'-phosphate</name>
        <dbReference type="ChEBI" id="CHEBI:597326"/>
    </ligand>
</feature>
<feature type="binding site" evidence="1">
    <location>
        <position position="275"/>
    </location>
    <ligand>
        <name>pyridoxal 5'-phosphate</name>
        <dbReference type="ChEBI" id="CHEBI:597326"/>
    </ligand>
</feature>
<feature type="binding site" evidence="1">
    <location>
        <position position="303"/>
    </location>
    <ligand>
        <name>pyridoxal 5'-phosphate</name>
        <dbReference type="ChEBI" id="CHEBI:597326"/>
    </ligand>
</feature>
<feature type="modified residue" description="N6-(pyridoxal phosphate)lysine" evidence="1">
    <location>
        <position position="234"/>
    </location>
</feature>
<dbReference type="EC" id="3.7.1.3" evidence="1"/>
<dbReference type="EMBL" id="DS480471">
    <property type="protein sequence ID" value="EDO15247.1"/>
    <property type="molecule type" value="Genomic_DNA"/>
</dbReference>
<dbReference type="RefSeq" id="XP_001643105.1">
    <property type="nucleotide sequence ID" value="XM_001643055.1"/>
</dbReference>
<dbReference type="SMR" id="A7TR79"/>
<dbReference type="FunCoup" id="A7TR79">
    <property type="interactions" value="242"/>
</dbReference>
<dbReference type="STRING" id="436907.A7TR79"/>
<dbReference type="GeneID" id="5543316"/>
<dbReference type="KEGG" id="vpo:Kpol_1029p21"/>
<dbReference type="eggNOG" id="KOG3846">
    <property type="taxonomic scope" value="Eukaryota"/>
</dbReference>
<dbReference type="HOGENOM" id="CLU_003433_4_0_1"/>
<dbReference type="InParanoid" id="A7TR79"/>
<dbReference type="OMA" id="LPGWNSH"/>
<dbReference type="OrthoDB" id="5978656at2759"/>
<dbReference type="PhylomeDB" id="A7TR79"/>
<dbReference type="UniPathway" id="UPA00253">
    <property type="reaction ID" value="UER00329"/>
</dbReference>
<dbReference type="UniPathway" id="UPA00334">
    <property type="reaction ID" value="UER00455"/>
</dbReference>
<dbReference type="Proteomes" id="UP000000267">
    <property type="component" value="Unassembled WGS sequence"/>
</dbReference>
<dbReference type="GO" id="GO:0005737">
    <property type="term" value="C:cytoplasm"/>
    <property type="evidence" value="ECO:0007669"/>
    <property type="project" value="UniProtKB-SubCell"/>
</dbReference>
<dbReference type="GO" id="GO:0030429">
    <property type="term" value="F:kynureninase activity"/>
    <property type="evidence" value="ECO:0007669"/>
    <property type="project" value="UniProtKB-UniRule"/>
</dbReference>
<dbReference type="GO" id="GO:0030170">
    <property type="term" value="F:pyridoxal phosphate binding"/>
    <property type="evidence" value="ECO:0007669"/>
    <property type="project" value="UniProtKB-UniRule"/>
</dbReference>
<dbReference type="GO" id="GO:0034354">
    <property type="term" value="P:'de novo' NAD biosynthetic process from L-tryptophan"/>
    <property type="evidence" value="ECO:0007669"/>
    <property type="project" value="UniProtKB-UniRule"/>
</dbReference>
<dbReference type="GO" id="GO:0043420">
    <property type="term" value="P:anthranilate metabolic process"/>
    <property type="evidence" value="ECO:0007669"/>
    <property type="project" value="UniProtKB-UniRule"/>
</dbReference>
<dbReference type="GO" id="GO:0097053">
    <property type="term" value="P:L-kynurenine catabolic process"/>
    <property type="evidence" value="ECO:0007669"/>
    <property type="project" value="UniProtKB-UniRule"/>
</dbReference>
<dbReference type="GO" id="GO:0019441">
    <property type="term" value="P:L-tryptophan catabolic process to kynurenine"/>
    <property type="evidence" value="ECO:0007669"/>
    <property type="project" value="TreeGrafter"/>
</dbReference>
<dbReference type="GO" id="GO:0019805">
    <property type="term" value="P:quinolinate biosynthetic process"/>
    <property type="evidence" value="ECO:0007669"/>
    <property type="project" value="UniProtKB-UniRule"/>
</dbReference>
<dbReference type="FunFam" id="3.40.640.10:FF:000031">
    <property type="entry name" value="Kynureninase"/>
    <property type="match status" value="1"/>
</dbReference>
<dbReference type="Gene3D" id="3.90.1150.10">
    <property type="entry name" value="Aspartate Aminotransferase, domain 1"/>
    <property type="match status" value="1"/>
</dbReference>
<dbReference type="Gene3D" id="3.40.640.10">
    <property type="entry name" value="Type I PLP-dependent aspartate aminotransferase-like (Major domain)"/>
    <property type="match status" value="1"/>
</dbReference>
<dbReference type="HAMAP" id="MF_01970">
    <property type="entry name" value="Kynureninase"/>
    <property type="match status" value="1"/>
</dbReference>
<dbReference type="InterPro" id="IPR010111">
    <property type="entry name" value="Kynureninase"/>
</dbReference>
<dbReference type="InterPro" id="IPR015424">
    <property type="entry name" value="PyrdxlP-dep_Trfase"/>
</dbReference>
<dbReference type="InterPro" id="IPR015421">
    <property type="entry name" value="PyrdxlP-dep_Trfase_major"/>
</dbReference>
<dbReference type="InterPro" id="IPR015422">
    <property type="entry name" value="PyrdxlP-dep_Trfase_small"/>
</dbReference>
<dbReference type="NCBIfam" id="TIGR01814">
    <property type="entry name" value="kynureninase"/>
    <property type="match status" value="1"/>
</dbReference>
<dbReference type="PANTHER" id="PTHR14084">
    <property type="entry name" value="KYNURENINASE"/>
    <property type="match status" value="1"/>
</dbReference>
<dbReference type="PANTHER" id="PTHR14084:SF0">
    <property type="entry name" value="KYNURENINASE"/>
    <property type="match status" value="1"/>
</dbReference>
<dbReference type="Pfam" id="PF22580">
    <property type="entry name" value="KYNU_C"/>
    <property type="match status" value="1"/>
</dbReference>
<dbReference type="PIRSF" id="PIRSF038800">
    <property type="entry name" value="KYNU"/>
    <property type="match status" value="1"/>
</dbReference>
<dbReference type="SUPFAM" id="SSF53383">
    <property type="entry name" value="PLP-dependent transferases"/>
    <property type="match status" value="1"/>
</dbReference>
<protein>
    <recommendedName>
        <fullName evidence="1">Kynureninase</fullName>
        <ecNumber evidence="1">3.7.1.3</ecNumber>
    </recommendedName>
    <alternativeName>
        <fullName evidence="1">Biosynthesis of nicotinic acid protein 5</fullName>
    </alternativeName>
    <alternativeName>
        <fullName evidence="1">L-kynurenine hydrolase</fullName>
    </alternativeName>
</protein>
<accession>A7TR79</accession>
<evidence type="ECO:0000255" key="1">
    <source>
        <dbReference type="HAMAP-Rule" id="MF_03017"/>
    </source>
</evidence>
<gene>
    <name evidence="1" type="primary">BNA5</name>
    <name type="ORF">Kpol_1029p21</name>
</gene>
<keyword id="KW-0963">Cytoplasm</keyword>
<keyword id="KW-0378">Hydrolase</keyword>
<keyword id="KW-0662">Pyridine nucleotide biosynthesis</keyword>
<keyword id="KW-0663">Pyridoxal phosphate</keyword>
<keyword id="KW-1185">Reference proteome</keyword>
<name>KYNU_VANPO</name>